<name>EIF3F_PANTR</name>
<protein>
    <recommendedName>
        <fullName evidence="3">Eukaryotic translation initiation factor 3 subunit F</fullName>
        <shortName evidence="3">eIF3f</shortName>
    </recommendedName>
    <alternativeName>
        <fullName>Deubiquitinating enzyme eIF3f</fullName>
        <ecNumber>3.4.19.12</ecNumber>
    </alternativeName>
    <alternativeName>
        <fullName evidence="3">Eukaryotic translation initiation factor 3 subunit 5</fullName>
    </alternativeName>
    <alternativeName>
        <fullName evidence="3">eIF-3-epsilon</fullName>
    </alternativeName>
    <alternativeName>
        <fullName evidence="3">eIF3 p47</fullName>
    </alternativeName>
</protein>
<organism>
    <name type="scientific">Pan troglodytes</name>
    <name type="common">Chimpanzee</name>
    <dbReference type="NCBI Taxonomy" id="9598"/>
    <lineage>
        <taxon>Eukaryota</taxon>
        <taxon>Metazoa</taxon>
        <taxon>Chordata</taxon>
        <taxon>Craniata</taxon>
        <taxon>Vertebrata</taxon>
        <taxon>Euteleostomi</taxon>
        <taxon>Mammalia</taxon>
        <taxon>Eutheria</taxon>
        <taxon>Euarchontoglires</taxon>
        <taxon>Primates</taxon>
        <taxon>Haplorrhini</taxon>
        <taxon>Catarrhini</taxon>
        <taxon>Hominidae</taxon>
        <taxon>Pan</taxon>
    </lineage>
</organism>
<sequence>MATPAVPVSAPPATPAPVPAAAPVSAPASVPAPTPAPAAAPVPAAAPASSSDPAAAAATTAAPGQTPASAQAPAQTPAPALPGPALPGPFPGGRVVRLHPVILASIVDSYERRNEGAARVIGTLLGTVDKHSVEVTNCFSVPHNESEDEVAVDMEFAKNMYELHKKVSPNELILGWYATGHDITEHSVLIHEYYSREAPNPIHLTVDTSLQNGRMSIKAYVSTLMGVPGRTMGVMFTPLTVKYAYYDTERIGVDLIMKTCFSPNRVIGLSSDLQQVGGASARIQDALSTVLQYAEDVLSGKVSADNTVGRFLMSLVNQVPKIVPDDFETMLNSNINDLLMVTYLANLTQSQIALNEKLVNL</sequence>
<gene>
    <name evidence="3" type="primary">EIF3F</name>
    <name evidence="3" type="synonym">EIF3S5</name>
</gene>
<keyword id="KW-0007">Acetylation</keyword>
<keyword id="KW-0963">Cytoplasm</keyword>
<keyword id="KW-0378">Hydrolase</keyword>
<keyword id="KW-0396">Initiation factor</keyword>
<keyword id="KW-0597">Phosphoprotein</keyword>
<keyword id="KW-0645">Protease</keyword>
<keyword id="KW-0648">Protein biosynthesis</keyword>
<keyword id="KW-1185">Reference proteome</keyword>
<keyword id="KW-0788">Thiol protease</keyword>
<keyword id="KW-0833">Ubl conjugation pathway</keyword>
<evidence type="ECO:0000250" key="1"/>
<evidence type="ECO:0000250" key="2">
    <source>
        <dbReference type="UniProtKB" id="O00303"/>
    </source>
</evidence>
<evidence type="ECO:0000255" key="3">
    <source>
        <dbReference type="HAMAP-Rule" id="MF_03005"/>
    </source>
</evidence>
<evidence type="ECO:0000255" key="4">
    <source>
        <dbReference type="PROSITE-ProRule" id="PRU01182"/>
    </source>
</evidence>
<evidence type="ECO:0000256" key="5">
    <source>
        <dbReference type="SAM" id="MobiDB-lite"/>
    </source>
</evidence>
<feature type="initiator methionine" description="Removed" evidence="3">
    <location>
        <position position="1"/>
    </location>
</feature>
<feature type="chain" id="PRO_0000297557" description="Eukaryotic translation initiation factor 3 subunit F">
    <location>
        <begin position="2"/>
        <end position="361"/>
    </location>
</feature>
<feature type="domain" description="MPN" evidence="4">
    <location>
        <begin position="96"/>
        <end position="226"/>
    </location>
</feature>
<feature type="region of interest" description="Disordered" evidence="5">
    <location>
        <begin position="1"/>
        <end position="86"/>
    </location>
</feature>
<feature type="compositionally biased region" description="Pro residues" evidence="5">
    <location>
        <begin position="9"/>
        <end position="20"/>
    </location>
</feature>
<feature type="compositionally biased region" description="Pro residues" evidence="5">
    <location>
        <begin position="30"/>
        <end position="40"/>
    </location>
</feature>
<feature type="compositionally biased region" description="Low complexity" evidence="5">
    <location>
        <begin position="41"/>
        <end position="78"/>
    </location>
</feature>
<feature type="modified residue" description="N-acetylalanine" evidence="2 3">
    <location>
        <position position="2"/>
    </location>
</feature>
<feature type="modified residue" description="Phosphoserine; by CDK11; in vitro" evidence="2 3">
    <location>
        <position position="50"/>
    </location>
</feature>
<feature type="modified residue" description="N6-acetyllysine" evidence="2">
    <location>
        <position position="242"/>
    </location>
</feature>
<feature type="modified residue" description="Phosphoserine" evidence="2 3">
    <location>
        <position position="262"/>
    </location>
</feature>
<dbReference type="EC" id="3.4.19.12"/>
<dbReference type="EMBL" id="AB222111">
    <property type="protein sequence ID" value="BAF62356.1"/>
    <property type="molecule type" value="mRNA"/>
</dbReference>
<dbReference type="RefSeq" id="NP_001104282.1">
    <property type="nucleotide sequence ID" value="NM_001110812.1"/>
</dbReference>
<dbReference type="SMR" id="A5A6I3"/>
<dbReference type="FunCoup" id="A5A6I3">
    <property type="interactions" value="2828"/>
</dbReference>
<dbReference type="STRING" id="9598.ENSPTRP00000005810"/>
<dbReference type="PaxDb" id="9598-ENSPTRP00000005810"/>
<dbReference type="GeneID" id="451007"/>
<dbReference type="KEGG" id="ptr:451007"/>
<dbReference type="CTD" id="8665"/>
<dbReference type="eggNOG" id="KOG2975">
    <property type="taxonomic scope" value="Eukaryota"/>
</dbReference>
<dbReference type="InParanoid" id="A5A6I3"/>
<dbReference type="OrthoDB" id="15743at9604"/>
<dbReference type="Proteomes" id="UP000002277">
    <property type="component" value="Unplaced"/>
</dbReference>
<dbReference type="GO" id="GO:0016282">
    <property type="term" value="C:eukaryotic 43S preinitiation complex"/>
    <property type="evidence" value="ECO:0007669"/>
    <property type="project" value="UniProtKB-UniRule"/>
</dbReference>
<dbReference type="GO" id="GO:0033290">
    <property type="term" value="C:eukaryotic 48S preinitiation complex"/>
    <property type="evidence" value="ECO:0007669"/>
    <property type="project" value="UniProtKB-UniRule"/>
</dbReference>
<dbReference type="GO" id="GO:0005852">
    <property type="term" value="C:eukaryotic translation initiation factor 3 complex"/>
    <property type="evidence" value="ECO:0000250"/>
    <property type="project" value="UniProtKB"/>
</dbReference>
<dbReference type="GO" id="GO:0071541">
    <property type="term" value="C:eukaryotic translation initiation factor 3 complex, eIF3m"/>
    <property type="evidence" value="ECO:0000318"/>
    <property type="project" value="GO_Central"/>
</dbReference>
<dbReference type="GO" id="GO:0004843">
    <property type="term" value="F:cysteine-type deubiquitinase activity"/>
    <property type="evidence" value="ECO:0007669"/>
    <property type="project" value="UniProtKB-EC"/>
</dbReference>
<dbReference type="GO" id="GO:0008237">
    <property type="term" value="F:metallopeptidase activity"/>
    <property type="evidence" value="ECO:0007669"/>
    <property type="project" value="InterPro"/>
</dbReference>
<dbReference type="GO" id="GO:0003743">
    <property type="term" value="F:translation initiation factor activity"/>
    <property type="evidence" value="ECO:0007669"/>
    <property type="project" value="UniProtKB-UniRule"/>
</dbReference>
<dbReference type="GO" id="GO:0031369">
    <property type="term" value="F:translation initiation factor binding"/>
    <property type="evidence" value="ECO:0000318"/>
    <property type="project" value="GO_Central"/>
</dbReference>
<dbReference type="GO" id="GO:0001732">
    <property type="term" value="P:formation of cytoplasmic translation initiation complex"/>
    <property type="evidence" value="ECO:0007669"/>
    <property type="project" value="UniProtKB-UniRule"/>
</dbReference>
<dbReference type="GO" id="GO:0006508">
    <property type="term" value="P:proteolysis"/>
    <property type="evidence" value="ECO:0007669"/>
    <property type="project" value="UniProtKB-KW"/>
</dbReference>
<dbReference type="GO" id="GO:0006413">
    <property type="term" value="P:translational initiation"/>
    <property type="evidence" value="ECO:0000250"/>
    <property type="project" value="UniProtKB"/>
</dbReference>
<dbReference type="CDD" id="cd08064">
    <property type="entry name" value="MPN_eIF3f"/>
    <property type="match status" value="1"/>
</dbReference>
<dbReference type="FunFam" id="3.40.140.10:FF:000014">
    <property type="entry name" value="Eukaryotic translation initiation factor 3 subunit F"/>
    <property type="match status" value="1"/>
</dbReference>
<dbReference type="Gene3D" id="3.40.140.10">
    <property type="entry name" value="Cytidine Deaminase, domain 2"/>
    <property type="match status" value="1"/>
</dbReference>
<dbReference type="HAMAP" id="MF_03005">
    <property type="entry name" value="eIF3f"/>
    <property type="match status" value="1"/>
</dbReference>
<dbReference type="InterPro" id="IPR027531">
    <property type="entry name" value="eIF3f"/>
</dbReference>
<dbReference type="InterPro" id="IPR024969">
    <property type="entry name" value="EIF3F/CSN6-like_C"/>
</dbReference>
<dbReference type="InterPro" id="IPR000555">
    <property type="entry name" value="JAMM/MPN+_dom"/>
</dbReference>
<dbReference type="InterPro" id="IPR037518">
    <property type="entry name" value="MPN"/>
</dbReference>
<dbReference type="PANTHER" id="PTHR10540:SF6">
    <property type="entry name" value="EUKARYOTIC TRANSLATION INITIATION FACTOR 3 SUBUNIT F"/>
    <property type="match status" value="1"/>
</dbReference>
<dbReference type="PANTHER" id="PTHR10540">
    <property type="entry name" value="EUKARYOTIC TRANSLATION INITIATION FACTOR 3 SUBUNIT F-RELATED"/>
    <property type="match status" value="1"/>
</dbReference>
<dbReference type="Pfam" id="PF01398">
    <property type="entry name" value="JAB"/>
    <property type="match status" value="1"/>
</dbReference>
<dbReference type="Pfam" id="PF13012">
    <property type="entry name" value="MitMem_reg"/>
    <property type="match status" value="1"/>
</dbReference>
<dbReference type="SMART" id="SM00232">
    <property type="entry name" value="JAB_MPN"/>
    <property type="match status" value="1"/>
</dbReference>
<dbReference type="PROSITE" id="PS50249">
    <property type="entry name" value="MPN"/>
    <property type="match status" value="1"/>
</dbReference>
<accession>A5A6I3</accession>
<reference key="1">
    <citation type="journal article" date="2007" name="Gene">
        <title>Mapping of chimpanzee full-length cDNAs onto the human genome unveils large potential divergence of the transcriptome.</title>
        <authorList>
            <person name="Sakate R."/>
            <person name="Suto Y."/>
            <person name="Imanishi T."/>
            <person name="Tanoue T."/>
            <person name="Hida M."/>
            <person name="Hayasaka I."/>
            <person name="Kusuda J."/>
            <person name="Gojobori T."/>
            <person name="Hashimoto K."/>
            <person name="Hirai M."/>
        </authorList>
    </citation>
    <scope>NUCLEOTIDE SEQUENCE [MRNA]</scope>
    <source>
        <tissue>Cerebellum</tissue>
    </source>
</reference>
<proteinExistence type="evidence at transcript level"/>
<comment type="function">
    <text evidence="3">Component of the eukaryotic translation initiation factor 3 (eIF-3) complex, which is required for several steps in the initiation of protein synthesis. The eIF-3 complex associates with the 40S ribosome and facilitates the recruitment of eIF-1, eIF-1A, eIF-2:GTP:methionyl-tRNAi and eIF-5 to form the 43S pre-initiation complex (43S PIC). The eIF-3 complex stimulates mRNA recruitment to the 43S PIC and scanning of the mRNA for AUG recognition. The eIF-3 complex is also required for disassembly and recycling of post-termination ribosomal complexes and subsequently prevents premature joining of the 40S and 60S ribosomal subunits prior to initiation. The eIF-3 complex specifically targets and initiates translation of a subset of mRNAs involved in cell proliferation, including cell cycling, differentiation and apoptosis, and uses different modes of RNA stem-loop binding to exert either translational activation or repression.</text>
</comment>
<comment type="function">
    <text evidence="3">Deubiquitinates activated NOTCH1, promoting its nuclear import, thereby acting as a positive regulator of Notch signaling.</text>
</comment>
<comment type="catalytic activity">
    <reaction>
        <text>Thiol-dependent hydrolysis of ester, thioester, amide, peptide and isopeptide bonds formed by the C-terminal Gly of ubiquitin (a 76-residue protein attached to proteins as an intracellular targeting signal).</text>
        <dbReference type="EC" id="3.4.19.12"/>
    </reaction>
</comment>
<comment type="subunit">
    <text evidence="3">Component of the eukaryotic translation initiation factor 3 (eIF-3) complex, which is composed of 13 subunits: EIF3A, EIF3B, EIF3C, EIF3D, EIF3E, EIF3F, EIF3G, EIF3H, EIF3I, EIF3J, EIF3K, EIF3L and EIF3M. The eIF-3 complex appears to include 3 stable modules: module A is composed of EIF3A, EIF3B, EIF3G and EIF3I; module B is composed of EIF3F, EIF3H, and EIF3M; and module C is composed of EIF3C, EIF3D, EIF3E, EIF3K and EIF3L. EIF3C of module C binds EIF3B of module A and EIF3H of module B, thereby linking the three modules. EIF3J is a labile subunit that binds to the eIF-3 complex via EIF3B. The eIF-3 complex interacts with RPS6KB1 under conditions of nutrient depletion. Mitogenic stimulation leads to binding and activation of a complex composed of MTOR and RPTOR, leading to phosphorylation and release of RPS6KB1 and binding of EIF4B to eIF-3. Interacts with RNF139; the interaction leads to protein translation inhibitions in a ubiquitination-dependent manner. Interacts with DTX1, the interaction is required for deubiquitinating activity towards NOTCH1 (By similarity).</text>
</comment>
<comment type="subcellular location">
    <subcellularLocation>
        <location evidence="3">Cytoplasm</location>
    </subcellularLocation>
</comment>
<comment type="domain">
    <text evidence="1">The MPN domain mediates deubiquitinating activity.</text>
</comment>
<comment type="PTM">
    <text evidence="1">Phosphorylation is enhanced upon serum stimulation. Phosphorylated during apoptosis by caspase-processed CDK11 (By similarity).</text>
</comment>
<comment type="similarity">
    <text evidence="3">Belongs to the eIF-3 subunit F family.</text>
</comment>